<comment type="function">
    <text evidence="4 7">Specifically recognizes and binds N6-methyladenosine (m6A)-containing RNAs, and regulates mRNA stability (Probable). M6A is a modification present at internal sites of mRNAs and some non-coding RNAs and plays a role in mRNA stability and processing (Probable). Required for the correct timing of leaf formation and normal leaf morphology (PubMed:29643069). Required for proper trichome branching and morphology (PubMed:29643069). Functions redundantly with ECT2 (PubMed:29643069).</text>
</comment>
<comment type="subcellular location">
    <subcellularLocation>
        <location evidence="4">Cytoplasm</location>
    </subcellularLocation>
</comment>
<comment type="alternative products">
    <event type="alternative splicing"/>
    <isoform>
        <id>F4K1Z0-1</id>
        <name>1</name>
        <sequence type="displayed"/>
    </isoform>
    <isoform>
        <id>F4K1Z0-2</id>
        <name>2</name>
        <sequence type="described" ref="VSP_059897"/>
    </isoform>
</comment>
<comment type="tissue specificity">
    <text evidence="4">Expressed in the shoot apex, at the sites of leaf formation, and in emerging leaves.</text>
</comment>
<comment type="disruption phenotype">
    <text evidence="4">Aberrant trichome branching with an increase in number of spikes (PubMed:29643069). The double mutant plants ect2 and ect3 exhibit delayed timing of leaf formation and altered leaf morphology (PubMed:29643069).</text>
</comment>
<gene>
    <name evidence="5" type="primary">ECT3</name>
    <name evidence="8" type="ordered locus">At5g61020</name>
    <name evidence="9" type="ORF">MAF19.3</name>
</gene>
<proteinExistence type="evidence at protein level"/>
<accession>F4K1Z0</accession>
<accession>Q93ZP1</accession>
<accession>Q9FNR2</accession>
<evidence type="ECO:0000250" key="1">
    <source>
        <dbReference type="UniProtKB" id="Q9LJE5"/>
    </source>
</evidence>
<evidence type="ECO:0000250" key="2">
    <source>
        <dbReference type="UniProtKB" id="Q9Y5A9"/>
    </source>
</evidence>
<evidence type="ECO:0000255" key="3">
    <source>
        <dbReference type="PROSITE-ProRule" id="PRU00225"/>
    </source>
</evidence>
<evidence type="ECO:0000269" key="4">
    <source>
    </source>
</evidence>
<evidence type="ECO:0000303" key="5">
    <source>
    </source>
</evidence>
<evidence type="ECO:0000305" key="6"/>
<evidence type="ECO:0000305" key="7">
    <source>
    </source>
</evidence>
<evidence type="ECO:0000312" key="8">
    <source>
        <dbReference type="Araport" id="AT5G61020"/>
    </source>
</evidence>
<evidence type="ECO:0000312" key="9">
    <source>
        <dbReference type="EMBL" id="BAB10365.1"/>
    </source>
</evidence>
<dbReference type="EMBL" id="AB006696">
    <property type="protein sequence ID" value="BAB10365.1"/>
    <property type="molecule type" value="Genomic_DNA"/>
</dbReference>
<dbReference type="EMBL" id="CP002688">
    <property type="protein sequence ID" value="AED97412.1"/>
    <property type="molecule type" value="Genomic_DNA"/>
</dbReference>
<dbReference type="EMBL" id="CP002688">
    <property type="protein sequence ID" value="AED97413.1"/>
    <property type="molecule type" value="Genomic_DNA"/>
</dbReference>
<dbReference type="EMBL" id="AY056421">
    <property type="protein sequence ID" value="AAL08277.1"/>
    <property type="molecule type" value="mRNA"/>
</dbReference>
<dbReference type="EMBL" id="AY065413">
    <property type="protein sequence ID" value="AAL38854.1"/>
    <property type="molecule type" value="mRNA"/>
</dbReference>
<dbReference type="EMBL" id="AY096551">
    <property type="protein sequence ID" value="AAM20201.1"/>
    <property type="molecule type" value="mRNA"/>
</dbReference>
<dbReference type="EMBL" id="AK226952">
    <property type="protein sequence ID" value="BAE99022.1"/>
    <property type="molecule type" value="mRNA"/>
</dbReference>
<dbReference type="RefSeq" id="NP_568932.2">
    <molecule id="F4K1Z0-2"/>
    <property type="nucleotide sequence ID" value="NM_125495.2"/>
</dbReference>
<dbReference type="RefSeq" id="NP_851236.1">
    <molecule id="F4K1Z0-1"/>
    <property type="nucleotide sequence ID" value="NM_180905.3"/>
</dbReference>
<dbReference type="SMR" id="F4K1Z0"/>
<dbReference type="FunCoup" id="F4K1Z0">
    <property type="interactions" value="1931"/>
</dbReference>
<dbReference type="STRING" id="3702.F4K1Z0"/>
<dbReference type="iPTMnet" id="F4K1Z0"/>
<dbReference type="PaxDb" id="3702-AT5G61020.1"/>
<dbReference type="ProteomicsDB" id="222057">
    <molecule id="F4K1Z0-1"/>
</dbReference>
<dbReference type="EnsemblPlants" id="AT5G61020.1">
    <molecule id="F4K1Z0-1"/>
    <property type="protein sequence ID" value="AT5G61020.1"/>
    <property type="gene ID" value="AT5G61020"/>
</dbReference>
<dbReference type="EnsemblPlants" id="AT5G61020.2">
    <molecule id="F4K1Z0-2"/>
    <property type="protein sequence ID" value="AT5G61020.2"/>
    <property type="gene ID" value="AT5G61020"/>
</dbReference>
<dbReference type="GeneID" id="836223"/>
<dbReference type="Gramene" id="AT5G61020.1">
    <molecule id="F4K1Z0-1"/>
    <property type="protein sequence ID" value="AT5G61020.1"/>
    <property type="gene ID" value="AT5G61020"/>
</dbReference>
<dbReference type="Gramene" id="AT5G61020.2">
    <molecule id="F4K1Z0-2"/>
    <property type="protein sequence ID" value="AT5G61020.2"/>
    <property type="gene ID" value="AT5G61020"/>
</dbReference>
<dbReference type="KEGG" id="ath:AT5G61020"/>
<dbReference type="Araport" id="AT5G61020"/>
<dbReference type="TAIR" id="AT5G61020">
    <property type="gene designation" value="ECT3"/>
</dbReference>
<dbReference type="eggNOG" id="KOG1901">
    <property type="taxonomic scope" value="Eukaryota"/>
</dbReference>
<dbReference type="HOGENOM" id="CLU_017795_1_0_1"/>
<dbReference type="InParanoid" id="F4K1Z0"/>
<dbReference type="OMA" id="EHASKAC"/>
<dbReference type="PRO" id="PR:F4K1Z0"/>
<dbReference type="Proteomes" id="UP000006548">
    <property type="component" value="Chromosome 5"/>
</dbReference>
<dbReference type="ExpressionAtlas" id="F4K1Z0">
    <property type="expression patterns" value="baseline and differential"/>
</dbReference>
<dbReference type="GO" id="GO:0005737">
    <property type="term" value="C:cytoplasm"/>
    <property type="evidence" value="ECO:0007669"/>
    <property type="project" value="UniProtKB-SubCell"/>
</dbReference>
<dbReference type="GO" id="GO:0003729">
    <property type="term" value="F:mRNA binding"/>
    <property type="evidence" value="ECO:0000314"/>
    <property type="project" value="TAIR"/>
</dbReference>
<dbReference type="CDD" id="cd21134">
    <property type="entry name" value="YTH"/>
    <property type="match status" value="1"/>
</dbReference>
<dbReference type="FunFam" id="3.10.590.10:FF:000001">
    <property type="entry name" value="YTH domain family 1, isoform CRA_a"/>
    <property type="match status" value="1"/>
</dbReference>
<dbReference type="Gene3D" id="3.10.590.10">
    <property type="entry name" value="ph1033 like domains"/>
    <property type="match status" value="1"/>
</dbReference>
<dbReference type="InterPro" id="IPR007275">
    <property type="entry name" value="YTH_domain"/>
</dbReference>
<dbReference type="InterPro" id="IPR045168">
    <property type="entry name" value="YTH_prot"/>
</dbReference>
<dbReference type="PANTHER" id="PTHR12357:SF93">
    <property type="entry name" value="YTH DOMAIN-CONTAINING PROTEIN ECT3"/>
    <property type="match status" value="1"/>
</dbReference>
<dbReference type="PANTHER" id="PTHR12357">
    <property type="entry name" value="YTH YT521-B HOMOLOGY DOMAIN-CONTAINING"/>
    <property type="match status" value="1"/>
</dbReference>
<dbReference type="Pfam" id="PF04146">
    <property type="entry name" value="YTH"/>
    <property type="match status" value="1"/>
</dbReference>
<dbReference type="PROSITE" id="PS50882">
    <property type="entry name" value="YTH"/>
    <property type="match status" value="1"/>
</dbReference>
<protein>
    <recommendedName>
        <fullName evidence="6">YTH domain-containing protein ECT3</fullName>
    </recommendedName>
    <alternativeName>
        <fullName evidence="5">Protein EVOLUTIONARILY CONSERVED C-TERMINAL REGION 3</fullName>
    </alternativeName>
</protein>
<reference key="1">
    <citation type="journal article" date="1997" name="DNA Res.">
        <title>Structural analysis of Arabidopsis thaliana chromosome 5. II. Sequence features of the regions of 1,044,062 bp covered by thirteen physically assigned P1 clones.</title>
        <authorList>
            <person name="Kotani H."/>
            <person name="Nakamura Y."/>
            <person name="Sato S."/>
            <person name="Kaneko T."/>
            <person name="Asamizu E."/>
            <person name="Miyajima N."/>
            <person name="Tabata S."/>
        </authorList>
    </citation>
    <scope>NUCLEOTIDE SEQUENCE [LARGE SCALE GENOMIC DNA]</scope>
    <source>
        <strain>cv. Columbia</strain>
    </source>
</reference>
<reference key="2">
    <citation type="journal article" date="2017" name="Plant J.">
        <title>Araport11: a complete reannotation of the Arabidopsis thaliana reference genome.</title>
        <authorList>
            <person name="Cheng C.Y."/>
            <person name="Krishnakumar V."/>
            <person name="Chan A.P."/>
            <person name="Thibaud-Nissen F."/>
            <person name="Schobel S."/>
            <person name="Town C.D."/>
        </authorList>
    </citation>
    <scope>GENOME REANNOTATION</scope>
    <source>
        <strain>cv. Columbia</strain>
    </source>
</reference>
<reference key="3">
    <citation type="journal article" date="2003" name="Science">
        <title>Empirical analysis of transcriptional activity in the Arabidopsis genome.</title>
        <authorList>
            <person name="Yamada K."/>
            <person name="Lim J."/>
            <person name="Dale J.M."/>
            <person name="Chen H."/>
            <person name="Shinn P."/>
            <person name="Palm C.J."/>
            <person name="Southwick A.M."/>
            <person name="Wu H.C."/>
            <person name="Kim C.J."/>
            <person name="Nguyen M."/>
            <person name="Pham P.K."/>
            <person name="Cheuk R.F."/>
            <person name="Karlin-Newmann G."/>
            <person name="Liu S.X."/>
            <person name="Lam B."/>
            <person name="Sakano H."/>
            <person name="Wu T."/>
            <person name="Yu G."/>
            <person name="Miranda M."/>
            <person name="Quach H.L."/>
            <person name="Tripp M."/>
            <person name="Chang C.H."/>
            <person name="Lee J.M."/>
            <person name="Toriumi M.J."/>
            <person name="Chan M.M."/>
            <person name="Tang C.C."/>
            <person name="Onodera C.S."/>
            <person name="Deng J.M."/>
            <person name="Akiyama K."/>
            <person name="Ansari Y."/>
            <person name="Arakawa T."/>
            <person name="Banh J."/>
            <person name="Banno F."/>
            <person name="Bowser L."/>
            <person name="Brooks S.Y."/>
            <person name="Carninci P."/>
            <person name="Chao Q."/>
            <person name="Choy N."/>
            <person name="Enju A."/>
            <person name="Goldsmith A.D."/>
            <person name="Gurjal M."/>
            <person name="Hansen N.F."/>
            <person name="Hayashizaki Y."/>
            <person name="Johnson-Hopson C."/>
            <person name="Hsuan V.W."/>
            <person name="Iida K."/>
            <person name="Karnes M."/>
            <person name="Khan S."/>
            <person name="Koesema E."/>
            <person name="Ishida J."/>
            <person name="Jiang P.X."/>
            <person name="Jones T."/>
            <person name="Kawai J."/>
            <person name="Kamiya A."/>
            <person name="Meyers C."/>
            <person name="Nakajima M."/>
            <person name="Narusaka M."/>
            <person name="Seki M."/>
            <person name="Sakurai T."/>
            <person name="Satou M."/>
            <person name="Tamse R."/>
            <person name="Vaysberg M."/>
            <person name="Wallender E.K."/>
            <person name="Wong C."/>
            <person name="Yamamura Y."/>
            <person name="Yuan S."/>
            <person name="Shinozaki K."/>
            <person name="Davis R.W."/>
            <person name="Theologis A."/>
            <person name="Ecker J.R."/>
        </authorList>
    </citation>
    <scope>NUCLEOTIDE SEQUENCE [LARGE SCALE MRNA] (ISOFORMS 1 AND 2)</scope>
    <source>
        <strain>cv. Columbia</strain>
    </source>
</reference>
<reference key="4">
    <citation type="submission" date="2006-07" db="EMBL/GenBank/DDBJ databases">
        <title>Large-scale analysis of RIKEN Arabidopsis full-length (RAFL) cDNAs.</title>
        <authorList>
            <person name="Totoki Y."/>
            <person name="Seki M."/>
            <person name="Ishida J."/>
            <person name="Nakajima M."/>
            <person name="Enju A."/>
            <person name="Kamiya A."/>
            <person name="Narusaka M."/>
            <person name="Shin-i T."/>
            <person name="Nakagawa M."/>
            <person name="Sakamoto N."/>
            <person name="Oishi K."/>
            <person name="Kohara Y."/>
            <person name="Kobayashi M."/>
            <person name="Toyoda A."/>
            <person name="Sakaki Y."/>
            <person name="Sakurai T."/>
            <person name="Iida K."/>
            <person name="Akiyama K."/>
            <person name="Satou M."/>
            <person name="Toyoda T."/>
            <person name="Konagaya A."/>
            <person name="Carninci P."/>
            <person name="Kawai J."/>
            <person name="Hayashizaki Y."/>
            <person name="Shinozaki K."/>
        </authorList>
    </citation>
    <scope>NUCLEOTIDE SEQUENCE [LARGE SCALE MRNA] (ISOFORM 2)</scope>
    <source>
        <strain>cv. Columbia</strain>
    </source>
</reference>
<reference key="5">
    <citation type="journal article" date="2018" name="Plant Cell">
        <title>An m6A-YTH module controls developmental timing and morphogenesis in Arabidopsis.</title>
        <authorList>
            <person name="Arribas-Hernandez L."/>
            <person name="Bressendorff S."/>
            <person name="Hansen M.H."/>
            <person name="Poulsen C."/>
            <person name="Erdmann S."/>
            <person name="Brodersen P."/>
        </authorList>
    </citation>
    <scope>FUNCTION</scope>
    <scope>SUBCELLULAR LOCATION</scope>
    <scope>BINDING TO N6-METHYLADENOSINE (M6A)-CONTAINING RNA</scope>
    <scope>TISSUE SPECIFICITY</scope>
    <scope>MUTAGENESIS OF TRP-283</scope>
    <scope>DISRUPTION PHENOTYPE</scope>
</reference>
<name>ECT3_ARATH</name>
<sequence>MANPDHVSDVLHNLSIDPTTKALAPDSETKLQGAYGGNGNDFLLNDELVEATKIGKPSLLSKDGGVTKDKGSNLKKLGYQSAAYNAKGSYGKGAYAYGYYPPAYQYPRHGYTGSYASGKTNLQYQYLTQQGRSAGNGQSYGGYMDNIYSNYGMCGPYTNGYGYGSYGYDSWKYMPNWYAVNNTYKPRNGYHGYGKENIEGLNEMNRGPRAKGFNSQDGSKVMAVSLKEQRVTETEKLSEDVSLLDPKDYNKIDFPETYTEAKFYVIKSYSEDDIHKSIKYSVWSSTPNGNKKLDASYNEAKQKSDGCPVFLLFSVNTSGQFVGLAEMVGPVDFNKTVEYWQQDKWIGCFPVKWHFVKDIPNSSLRHITLENNENKPVTNSRDTQEVKLEQGIKVIKIFKDHASKTCILDDFEFYENRQKIIQERKSKHLQIKKQTLVANADKGVMSKINLVKPQESTTASEDAAALGVAAEVTKESKVVKETELPVEKNAVATAC</sequence>
<keyword id="KW-0025">Alternative splicing</keyword>
<keyword id="KW-0963">Cytoplasm</keyword>
<keyword id="KW-1185">Reference proteome</keyword>
<keyword id="KW-0694">RNA-binding</keyword>
<feature type="chain" id="PRO_0000445525" description="YTH domain-containing protein ECT3">
    <location>
        <begin position="1"/>
        <end position="495"/>
    </location>
</feature>
<feature type="domain" description="YTH" evidence="3">
    <location>
        <begin position="261"/>
        <end position="398"/>
    </location>
</feature>
<feature type="binding site" evidence="2">
    <location>
        <begin position="267"/>
        <end position="269"/>
    </location>
    <ligand>
        <name>RNA</name>
        <dbReference type="ChEBI" id="CHEBI:33697"/>
    </ligand>
    <ligandPart>
        <name>N(6)-methyladenosine 5'-phosphate residue</name>
        <dbReference type="ChEBI" id="CHEBI:74449"/>
    </ligandPart>
</feature>
<feature type="binding site" evidence="2">
    <location>
        <position position="273"/>
    </location>
    <ligand>
        <name>RNA</name>
        <dbReference type="ChEBI" id="CHEBI:33697"/>
    </ligand>
    <ligandPart>
        <name>N(6)-methyladenosine 5'-phosphate residue</name>
        <dbReference type="ChEBI" id="CHEBI:74449"/>
    </ligandPart>
</feature>
<feature type="binding site" evidence="4">
    <location>
        <begin position="283"/>
        <end position="284"/>
    </location>
    <ligand>
        <name>RNA</name>
        <dbReference type="ChEBI" id="CHEBI:33697"/>
    </ligand>
    <ligandPart>
        <name>N(6)-methyladenosine 5'-phosphate residue</name>
        <dbReference type="ChEBI" id="CHEBI:74449"/>
    </ligandPart>
</feature>
<feature type="binding site" evidence="2">
    <location>
        <position position="316"/>
    </location>
    <ligand>
        <name>RNA</name>
        <dbReference type="ChEBI" id="CHEBI:33697"/>
    </ligand>
    <ligandPart>
        <name>N(6)-methyladenosine 5'-phosphate residue</name>
        <dbReference type="ChEBI" id="CHEBI:74449"/>
    </ligandPart>
</feature>
<feature type="binding site" evidence="2">
    <location>
        <position position="340"/>
    </location>
    <ligand>
        <name>RNA</name>
        <dbReference type="ChEBI" id="CHEBI:33697"/>
    </ligand>
    <ligandPart>
        <name>N(6)-methyladenosine 5'-phosphate residue</name>
        <dbReference type="ChEBI" id="CHEBI:74449"/>
    </ligandPart>
</feature>
<feature type="binding site" evidence="2">
    <location>
        <position position="345"/>
    </location>
    <ligand>
        <name>RNA</name>
        <dbReference type="ChEBI" id="CHEBI:33697"/>
    </ligand>
    <ligandPart>
        <name>N(6)-methyladenosine 5'-phosphate residue</name>
        <dbReference type="ChEBI" id="CHEBI:74449"/>
    </ligandPart>
</feature>
<feature type="binding site" evidence="1">
    <location>
        <position position="353"/>
    </location>
    <ligand>
        <name>RNA</name>
        <dbReference type="ChEBI" id="CHEBI:33697"/>
    </ligand>
    <ligandPart>
        <name>N(6)-methyladenosine 5'-phosphate residue</name>
        <dbReference type="ChEBI" id="CHEBI:74449"/>
    </ligandPart>
</feature>
<feature type="splice variant" id="VSP_059897" description="In isoform 2.">
    <location>
        <begin position="31"/>
        <end position="32"/>
    </location>
</feature>
<feature type="mutagenesis site" description="Reduces binding to N6-methyladenosine (m6A)-containing RNAs." evidence="4">
    <original>W</original>
    <variation>A</variation>
    <location>
        <position position="283"/>
    </location>
</feature>
<feature type="sequence conflict" description="In Ref. 3; AAL08277." evidence="6" ref="3">
    <original>A</original>
    <variation>G</variation>
    <location>
        <position position="51"/>
    </location>
</feature>
<organism>
    <name type="scientific">Arabidopsis thaliana</name>
    <name type="common">Mouse-ear cress</name>
    <dbReference type="NCBI Taxonomy" id="3702"/>
    <lineage>
        <taxon>Eukaryota</taxon>
        <taxon>Viridiplantae</taxon>
        <taxon>Streptophyta</taxon>
        <taxon>Embryophyta</taxon>
        <taxon>Tracheophyta</taxon>
        <taxon>Spermatophyta</taxon>
        <taxon>Magnoliopsida</taxon>
        <taxon>eudicotyledons</taxon>
        <taxon>Gunneridae</taxon>
        <taxon>Pentapetalae</taxon>
        <taxon>rosids</taxon>
        <taxon>malvids</taxon>
        <taxon>Brassicales</taxon>
        <taxon>Brassicaceae</taxon>
        <taxon>Camelineae</taxon>
        <taxon>Arabidopsis</taxon>
    </lineage>
</organism>